<proteinExistence type="inferred from homology"/>
<reference key="1">
    <citation type="journal article" date="2007" name="Genome Biol.">
        <title>Comparison of Francisella tularensis genomes reveals evolutionary events associated with the emergence of human pathogenic strains.</title>
        <authorList>
            <person name="Rohmer L."/>
            <person name="Fong C."/>
            <person name="Abmayr S."/>
            <person name="Wasnick M."/>
            <person name="Larson Freeman T.J."/>
            <person name="Radey M."/>
            <person name="Guina T."/>
            <person name="Svensson K."/>
            <person name="Hayden H.S."/>
            <person name="Jacobs M."/>
            <person name="Gallagher L.A."/>
            <person name="Manoil C."/>
            <person name="Ernst R.K."/>
            <person name="Drees B."/>
            <person name="Buckley D."/>
            <person name="Haugen E."/>
            <person name="Bovee D."/>
            <person name="Zhou Y."/>
            <person name="Chang J."/>
            <person name="Levy R."/>
            <person name="Lim R."/>
            <person name="Gillett W."/>
            <person name="Guenthener D."/>
            <person name="Kang A."/>
            <person name="Shaffer S.A."/>
            <person name="Taylor G."/>
            <person name="Chen J."/>
            <person name="Gallis B."/>
            <person name="D'Argenio D.A."/>
            <person name="Forsman M."/>
            <person name="Olson M.V."/>
            <person name="Goodlett D.R."/>
            <person name="Kaul R."/>
            <person name="Miller S.I."/>
            <person name="Brittnacher M.J."/>
        </authorList>
    </citation>
    <scope>NUCLEOTIDE SEQUENCE [LARGE SCALE GENOMIC DNA]</scope>
    <source>
        <strain>U112</strain>
    </source>
</reference>
<feature type="chain" id="PRO_0000335470" description="Translation initiation factor IF-2">
    <location>
        <begin position="1"/>
        <end position="846"/>
    </location>
</feature>
<feature type="domain" description="tr-type G">
    <location>
        <begin position="345"/>
        <end position="512"/>
    </location>
</feature>
<feature type="region of interest" description="Disordered" evidence="3">
    <location>
        <begin position="198"/>
        <end position="219"/>
    </location>
</feature>
<feature type="region of interest" description="G1" evidence="1">
    <location>
        <begin position="354"/>
        <end position="361"/>
    </location>
</feature>
<feature type="region of interest" description="G2" evidence="1">
    <location>
        <begin position="379"/>
        <end position="383"/>
    </location>
</feature>
<feature type="region of interest" description="G3" evidence="1">
    <location>
        <begin position="400"/>
        <end position="403"/>
    </location>
</feature>
<feature type="region of interest" description="G4" evidence="1">
    <location>
        <begin position="454"/>
        <end position="457"/>
    </location>
</feature>
<feature type="region of interest" description="G5" evidence="1">
    <location>
        <begin position="490"/>
        <end position="492"/>
    </location>
</feature>
<feature type="compositionally biased region" description="Basic residues" evidence="3">
    <location>
        <begin position="207"/>
        <end position="219"/>
    </location>
</feature>
<feature type="binding site" evidence="2">
    <location>
        <begin position="354"/>
        <end position="361"/>
    </location>
    <ligand>
        <name>GTP</name>
        <dbReference type="ChEBI" id="CHEBI:37565"/>
    </ligand>
</feature>
<feature type="binding site" evidence="2">
    <location>
        <begin position="400"/>
        <end position="404"/>
    </location>
    <ligand>
        <name>GTP</name>
        <dbReference type="ChEBI" id="CHEBI:37565"/>
    </ligand>
</feature>
<feature type="binding site" evidence="2">
    <location>
        <begin position="454"/>
        <end position="457"/>
    </location>
    <ligand>
        <name>GTP</name>
        <dbReference type="ChEBI" id="CHEBI:37565"/>
    </ligand>
</feature>
<protein>
    <recommendedName>
        <fullName evidence="2">Translation initiation factor IF-2</fullName>
    </recommendedName>
</protein>
<sequence>MAEITVGQLAQQTNKEVDALLKQLKSFGIEKSSEKDTLTPAEMKTLLEKINSAKNTATRKKVTSVKLDGKHKINVSVKRKRRVAKKVEQQESTTLEQPQELETMVQEVSQQVDIVKGQDNIEQIVENKEAVKVQEQRQAEIAKPVIKDSGFKITAMPEIKIEEIVTEDDEGLSASDKQAKKKAAKKVFSEAVNTNTKYKREEEEKKSKAKKAGGKGFKKANPRQLSQLAGDLESFDEFGAKKGKLKAPKVKKQEFTKPVENTVRTVEIHEGITVSELAQKMAVKGAEIVKVLFNMGVMATINQSLDQDTAILIVEEMGHKYTLHNENALEEAVTTVDRSSYKKISRAPVVTIMGHVDHGKTSLLDYIRQTRVVAGEAGGITQHIGAYSVKTDKGSITFLDTPGHEAFTSMRARGAKSTDIVILVVAADDGVMPQTEEAIQHAKAARVPIVVAVNKIDKPEADPDKVISELAQRNVIPESWGGDVMFVNVSAKTGEGVADLLEAVLLQSEVLELEAFAEGLAEGVVIESRLEKGRGPVATVLVQNGNLKQGDNILCGTEYGRVRAMHNDLGKKIKAAGPATPVEILGLSGVPAAGDEMVVIENEKKAKELAAQRSQKQKEAKIAQEQSLKLSNMFNNMGKEGEQQVLKIILKGDVQGSVEAIRESLLKLSTDEVKVDIIASGIGAITSSDVTLAVASTAVVIGFNVRADSAAKKLAETDGVEFRYYNIIYDLIDDVKKAMSGLLSPEMKEQIIGIAEVREVYRSSKFGSIAGCMVIEGVVKRTNPIRVLRNNVVIYEGTLESLKRFKDDASEVKKGLECGIGVKNYNDVREGDQIEVFEVIEVAKEL</sequence>
<name>IF2_FRATN</name>
<accession>A0Q8F3</accession>
<organism>
    <name type="scientific">Francisella tularensis subsp. novicida (strain U112)</name>
    <dbReference type="NCBI Taxonomy" id="401614"/>
    <lineage>
        <taxon>Bacteria</taxon>
        <taxon>Pseudomonadati</taxon>
        <taxon>Pseudomonadota</taxon>
        <taxon>Gammaproteobacteria</taxon>
        <taxon>Thiotrichales</taxon>
        <taxon>Francisellaceae</taxon>
        <taxon>Francisella</taxon>
    </lineage>
</organism>
<evidence type="ECO:0000250" key="1"/>
<evidence type="ECO:0000255" key="2">
    <source>
        <dbReference type="HAMAP-Rule" id="MF_00100"/>
    </source>
</evidence>
<evidence type="ECO:0000256" key="3">
    <source>
        <dbReference type="SAM" id="MobiDB-lite"/>
    </source>
</evidence>
<comment type="function">
    <text evidence="2">One of the essential components for the initiation of protein synthesis. Protects formylmethionyl-tRNA from spontaneous hydrolysis and promotes its binding to the 30S ribosomal subunits. Also involved in the hydrolysis of GTP during the formation of the 70S ribosomal complex.</text>
</comment>
<comment type="subcellular location">
    <subcellularLocation>
        <location evidence="2">Cytoplasm</location>
    </subcellularLocation>
</comment>
<comment type="similarity">
    <text evidence="2">Belongs to the TRAFAC class translation factor GTPase superfamily. Classic translation factor GTPase family. IF-2 subfamily.</text>
</comment>
<keyword id="KW-0963">Cytoplasm</keyword>
<keyword id="KW-0342">GTP-binding</keyword>
<keyword id="KW-0396">Initiation factor</keyword>
<keyword id="KW-0547">Nucleotide-binding</keyword>
<keyword id="KW-0648">Protein biosynthesis</keyword>
<gene>
    <name evidence="2" type="primary">infB</name>
    <name type="ordered locus">FTN_1660</name>
</gene>
<dbReference type="EMBL" id="CP000439">
    <property type="protein sequence ID" value="ABK90518.1"/>
    <property type="molecule type" value="Genomic_DNA"/>
</dbReference>
<dbReference type="RefSeq" id="WP_003041281.1">
    <property type="nucleotide sequence ID" value="NZ_CP009633.1"/>
</dbReference>
<dbReference type="SMR" id="A0Q8F3"/>
<dbReference type="KEGG" id="ftn:FTN_1660"/>
<dbReference type="KEGG" id="ftx:AW25_328"/>
<dbReference type="BioCyc" id="FTUL401614:G1G75-1721-MONOMER"/>
<dbReference type="Proteomes" id="UP000000762">
    <property type="component" value="Chromosome"/>
</dbReference>
<dbReference type="GO" id="GO:0005829">
    <property type="term" value="C:cytosol"/>
    <property type="evidence" value="ECO:0007669"/>
    <property type="project" value="TreeGrafter"/>
</dbReference>
<dbReference type="GO" id="GO:0005525">
    <property type="term" value="F:GTP binding"/>
    <property type="evidence" value="ECO:0007669"/>
    <property type="project" value="UniProtKB-KW"/>
</dbReference>
<dbReference type="GO" id="GO:0003924">
    <property type="term" value="F:GTPase activity"/>
    <property type="evidence" value="ECO:0007669"/>
    <property type="project" value="UniProtKB-UniRule"/>
</dbReference>
<dbReference type="GO" id="GO:0003743">
    <property type="term" value="F:translation initiation factor activity"/>
    <property type="evidence" value="ECO:0007669"/>
    <property type="project" value="UniProtKB-UniRule"/>
</dbReference>
<dbReference type="CDD" id="cd01887">
    <property type="entry name" value="IF2_eIF5B"/>
    <property type="match status" value="1"/>
</dbReference>
<dbReference type="CDD" id="cd03702">
    <property type="entry name" value="IF2_mtIF2_II"/>
    <property type="match status" value="1"/>
</dbReference>
<dbReference type="CDD" id="cd03692">
    <property type="entry name" value="mtIF2_IVc"/>
    <property type="match status" value="1"/>
</dbReference>
<dbReference type="FunFam" id="2.40.30.10:FF:000007">
    <property type="entry name" value="Translation initiation factor IF-2"/>
    <property type="match status" value="1"/>
</dbReference>
<dbReference type="FunFam" id="2.40.30.10:FF:000008">
    <property type="entry name" value="Translation initiation factor IF-2"/>
    <property type="match status" value="1"/>
</dbReference>
<dbReference type="FunFam" id="3.40.50.10050:FF:000001">
    <property type="entry name" value="Translation initiation factor IF-2"/>
    <property type="match status" value="1"/>
</dbReference>
<dbReference type="FunFam" id="3.40.50.300:FF:000019">
    <property type="entry name" value="Translation initiation factor IF-2"/>
    <property type="match status" value="1"/>
</dbReference>
<dbReference type="Gene3D" id="3.40.50.300">
    <property type="entry name" value="P-loop containing nucleotide triphosphate hydrolases"/>
    <property type="match status" value="1"/>
</dbReference>
<dbReference type="Gene3D" id="3.30.56.50">
    <property type="entry name" value="Putative DNA-binding domain, N-terminal subdomain of bacterial translation initiation factor IF2"/>
    <property type="match status" value="1"/>
</dbReference>
<dbReference type="Gene3D" id="2.40.30.10">
    <property type="entry name" value="Translation factors"/>
    <property type="match status" value="2"/>
</dbReference>
<dbReference type="Gene3D" id="3.40.50.10050">
    <property type="entry name" value="Translation initiation factor IF- 2, domain 3"/>
    <property type="match status" value="1"/>
</dbReference>
<dbReference type="HAMAP" id="MF_00100_B">
    <property type="entry name" value="IF_2_B"/>
    <property type="match status" value="1"/>
</dbReference>
<dbReference type="InterPro" id="IPR009061">
    <property type="entry name" value="DNA-bd_dom_put_sf"/>
</dbReference>
<dbReference type="InterPro" id="IPR053905">
    <property type="entry name" value="EF-G-like_DII"/>
</dbReference>
<dbReference type="InterPro" id="IPR044145">
    <property type="entry name" value="IF2_II"/>
</dbReference>
<dbReference type="InterPro" id="IPR006847">
    <property type="entry name" value="IF2_N"/>
</dbReference>
<dbReference type="InterPro" id="IPR027417">
    <property type="entry name" value="P-loop_NTPase"/>
</dbReference>
<dbReference type="InterPro" id="IPR005225">
    <property type="entry name" value="Small_GTP-bd"/>
</dbReference>
<dbReference type="InterPro" id="IPR000795">
    <property type="entry name" value="T_Tr_GTP-bd_dom"/>
</dbReference>
<dbReference type="InterPro" id="IPR000178">
    <property type="entry name" value="TF_IF2_bacterial-like"/>
</dbReference>
<dbReference type="InterPro" id="IPR015760">
    <property type="entry name" value="TIF_IF2"/>
</dbReference>
<dbReference type="InterPro" id="IPR023115">
    <property type="entry name" value="TIF_IF2_dom3"/>
</dbReference>
<dbReference type="InterPro" id="IPR036925">
    <property type="entry name" value="TIF_IF2_dom3_sf"/>
</dbReference>
<dbReference type="InterPro" id="IPR009000">
    <property type="entry name" value="Transl_B-barrel_sf"/>
</dbReference>
<dbReference type="NCBIfam" id="TIGR00487">
    <property type="entry name" value="IF-2"/>
    <property type="match status" value="1"/>
</dbReference>
<dbReference type="NCBIfam" id="TIGR00231">
    <property type="entry name" value="small_GTP"/>
    <property type="match status" value="1"/>
</dbReference>
<dbReference type="PANTHER" id="PTHR43381:SF5">
    <property type="entry name" value="TR-TYPE G DOMAIN-CONTAINING PROTEIN"/>
    <property type="match status" value="1"/>
</dbReference>
<dbReference type="PANTHER" id="PTHR43381">
    <property type="entry name" value="TRANSLATION INITIATION FACTOR IF-2-RELATED"/>
    <property type="match status" value="1"/>
</dbReference>
<dbReference type="Pfam" id="PF22042">
    <property type="entry name" value="EF-G_D2"/>
    <property type="match status" value="1"/>
</dbReference>
<dbReference type="Pfam" id="PF00009">
    <property type="entry name" value="GTP_EFTU"/>
    <property type="match status" value="1"/>
</dbReference>
<dbReference type="Pfam" id="PF11987">
    <property type="entry name" value="IF-2"/>
    <property type="match status" value="1"/>
</dbReference>
<dbReference type="Pfam" id="PF04760">
    <property type="entry name" value="IF2_N"/>
    <property type="match status" value="2"/>
</dbReference>
<dbReference type="SUPFAM" id="SSF52156">
    <property type="entry name" value="Initiation factor IF2/eIF5b, domain 3"/>
    <property type="match status" value="1"/>
</dbReference>
<dbReference type="SUPFAM" id="SSF52540">
    <property type="entry name" value="P-loop containing nucleoside triphosphate hydrolases"/>
    <property type="match status" value="1"/>
</dbReference>
<dbReference type="SUPFAM" id="SSF46955">
    <property type="entry name" value="Putative DNA-binding domain"/>
    <property type="match status" value="1"/>
</dbReference>
<dbReference type="SUPFAM" id="SSF50447">
    <property type="entry name" value="Translation proteins"/>
    <property type="match status" value="2"/>
</dbReference>
<dbReference type="PROSITE" id="PS51722">
    <property type="entry name" value="G_TR_2"/>
    <property type="match status" value="1"/>
</dbReference>
<dbReference type="PROSITE" id="PS01176">
    <property type="entry name" value="IF2"/>
    <property type="match status" value="1"/>
</dbReference>